<proteinExistence type="inferred from homology"/>
<protein>
    <recommendedName>
        <fullName>E3 ubiquitin-protein ligase LAP</fullName>
        <ecNumber>2.3.2.27</ecNumber>
    </recommendedName>
    <alternativeName>
        <fullName>Leukemia associated protein</fullName>
        <shortName>LAP</shortName>
    </alternativeName>
    <alternativeName>
        <fullName evidence="5">RING-type E3 ubiquitin transferase LAP</fullName>
    </alternativeName>
</protein>
<accession>Q9DHV7</accession>
<name>LAP_YLDV</name>
<gene>
    <name evidence="4" type="ordered locus">5L</name>
</gene>
<organism>
    <name type="scientific">Yaba-like disease virus</name>
    <name type="common">YLDV</name>
    <dbReference type="NCBI Taxonomy" id="132475"/>
    <lineage>
        <taxon>Viruses</taxon>
        <taxon>Varidnaviria</taxon>
        <taxon>Bamfordvirae</taxon>
        <taxon>Nucleocytoviricota</taxon>
        <taxon>Pokkesviricetes</taxon>
        <taxon>Chitovirales</taxon>
        <taxon>Poxviridae</taxon>
        <taxon>Chordopoxvirinae</taxon>
        <taxon>Yatapoxvirus</taxon>
        <taxon>Tanapox virus</taxon>
    </lineage>
</organism>
<organismHost>
    <name type="scientific">Homo sapiens</name>
    <name type="common">Human</name>
    <dbReference type="NCBI Taxonomy" id="9606"/>
</organismHost>
<organismHost>
    <name type="scientific">Simiiformes</name>
    <dbReference type="NCBI Taxonomy" id="314293"/>
</organismHost>
<comment type="function">
    <text evidence="1">E3 ubiquitin-protein ligase which promotes ubiquitination and subsequent degradation of host MHC-I and CD4 molecules, presumably to prevent lysis of infected cells by cytotoxic T-lymphocytes and NK cell. Binds target molecules through transmembrane interaction. The result of this ubiquitination is the enhancement of the endocytosis of the target chain and the delivery to the lysosome, where it is proteolytically destroyed.</text>
</comment>
<comment type="catalytic activity">
    <reaction>
        <text>S-ubiquitinyl-[E2 ubiquitin-conjugating enzyme]-L-cysteine + [acceptor protein]-L-lysine = [E2 ubiquitin-conjugating enzyme]-L-cysteine + N(6)-ubiquitinyl-[acceptor protein]-L-lysine.</text>
        <dbReference type="EC" id="2.3.2.27"/>
    </reaction>
</comment>
<comment type="subcellular location">
    <subcellularLocation>
        <location evidence="5">Host membrane</location>
        <topology evidence="5">Multi-pass membrane protein</topology>
    </subcellularLocation>
    <subcellularLocation>
        <location>Host Golgi apparatus</location>
        <location>Host trans-Golgi network membrane</location>
    </subcellularLocation>
    <subcellularLocation>
        <location evidence="1">Host early endosome membrane</location>
    </subcellularLocation>
</comment>
<comment type="domain">
    <text evidence="3">The RING-CH-type zinc finger domain is required for E3 ligase activity.</text>
</comment>
<comment type="similarity">
    <text evidence="5">Belongs to the poxviridae LAP protein family.</text>
</comment>
<sequence length="156" mass="18334">MSDICWICNDVCDERNNFCGCNEEYKVVHIKCMQLWINYSKKKECNLCKTKYNIKKTYVSFKKWNWCFNDKKTTLFKIFFILFALVFIFLTITLSNDMANLVTGINDLICSIIFLIVYTVVMLTSICFSVFVVAIVVDFLLEAKEKNSFLTIREIV</sequence>
<reference key="1">
    <citation type="journal article" date="2001" name="Virology">
        <title>The genome sequence of Yaba-like disease virus, a yatapoxvirus.</title>
        <authorList>
            <person name="Lee H.-J."/>
            <person name="Essani K."/>
            <person name="Smith G.L."/>
        </authorList>
    </citation>
    <scope>NUCLEOTIDE SEQUENCE [LARGE SCALE GENOMIC DNA]</scope>
</reference>
<keyword id="KW-1039">Host endosome</keyword>
<keyword id="KW-1040">Host Golgi apparatus</keyword>
<keyword id="KW-1043">Host membrane</keyword>
<keyword id="KW-0945">Host-virus interaction</keyword>
<keyword id="KW-1080">Inhibition of host adaptive immune response by virus</keyword>
<keyword id="KW-1115">Inhibition of host MHC class I molecule presentation by virus</keyword>
<keyword id="KW-0472">Membrane</keyword>
<keyword id="KW-0479">Metal-binding</keyword>
<keyword id="KW-1128">Modulation of host ubiquitin pathway by viral E3 ligase</keyword>
<keyword id="KW-1130">Modulation of host ubiquitin pathway by virus</keyword>
<keyword id="KW-0808">Transferase</keyword>
<keyword id="KW-0812">Transmembrane</keyword>
<keyword id="KW-1133">Transmembrane helix</keyword>
<keyword id="KW-0833">Ubl conjugation pathway</keyword>
<keyword id="KW-0899">Viral immunoevasion</keyword>
<keyword id="KW-0862">Zinc</keyword>
<keyword id="KW-0863">Zinc-finger</keyword>
<evidence type="ECO:0000250" key="1"/>
<evidence type="ECO:0000255" key="2"/>
<evidence type="ECO:0000255" key="3">
    <source>
        <dbReference type="PROSITE-ProRule" id="PRU00623"/>
    </source>
</evidence>
<evidence type="ECO:0000303" key="4">
    <source>
    </source>
</evidence>
<evidence type="ECO:0000305" key="5"/>
<feature type="chain" id="PRO_0000396004" description="E3 ubiquitin-protein ligase LAP">
    <location>
        <begin position="1"/>
        <end position="156"/>
    </location>
</feature>
<feature type="topological domain" description="Cytoplasmic" evidence="2">
    <location>
        <begin position="1"/>
        <end position="73"/>
    </location>
</feature>
<feature type="transmembrane region" description="Helical" evidence="2">
    <location>
        <begin position="74"/>
        <end position="94"/>
    </location>
</feature>
<feature type="topological domain" description="Lumenal" evidence="2">
    <location>
        <begin position="95"/>
        <end position="111"/>
    </location>
</feature>
<feature type="transmembrane region" description="Helical" evidence="2">
    <location>
        <begin position="112"/>
        <end position="132"/>
    </location>
</feature>
<feature type="topological domain" description="Cytoplasmic" evidence="2">
    <location>
        <begin position="133"/>
        <end position="156"/>
    </location>
</feature>
<feature type="zinc finger region" description="RING-CH-type" evidence="3">
    <location>
        <begin position="1"/>
        <end position="55"/>
    </location>
</feature>
<feature type="binding site" evidence="3">
    <location>
        <position position="5"/>
    </location>
    <ligand>
        <name>Zn(2+)</name>
        <dbReference type="ChEBI" id="CHEBI:29105"/>
        <label>1</label>
    </ligand>
</feature>
<feature type="binding site" evidence="3">
    <location>
        <position position="8"/>
    </location>
    <ligand>
        <name>Zn(2+)</name>
        <dbReference type="ChEBI" id="CHEBI:29105"/>
        <label>1</label>
    </ligand>
</feature>
<feature type="binding site" evidence="3">
    <location>
        <position position="19"/>
    </location>
    <ligand>
        <name>Zn(2+)</name>
        <dbReference type="ChEBI" id="CHEBI:29105"/>
        <label>2</label>
    </ligand>
</feature>
<feature type="binding site" evidence="3">
    <location>
        <position position="21"/>
    </location>
    <ligand>
        <name>Zn(2+)</name>
        <dbReference type="ChEBI" id="CHEBI:29105"/>
        <label>2</label>
    </ligand>
</feature>
<feature type="binding site" evidence="3">
    <location>
        <position position="29"/>
    </location>
    <ligand>
        <name>Zn(2+)</name>
        <dbReference type="ChEBI" id="CHEBI:29105"/>
        <label>1</label>
    </ligand>
</feature>
<feature type="binding site" evidence="3">
    <location>
        <position position="32"/>
    </location>
    <ligand>
        <name>Zn(2+)</name>
        <dbReference type="ChEBI" id="CHEBI:29105"/>
        <label>1</label>
    </ligand>
</feature>
<feature type="binding site" evidence="3">
    <location>
        <position position="45"/>
    </location>
    <ligand>
        <name>Zn(2+)</name>
        <dbReference type="ChEBI" id="CHEBI:29105"/>
        <label>2</label>
    </ligand>
</feature>
<feature type="binding site" evidence="3">
    <location>
        <position position="48"/>
    </location>
    <ligand>
        <name>Zn(2+)</name>
        <dbReference type="ChEBI" id="CHEBI:29105"/>
        <label>2</label>
    </ligand>
</feature>
<dbReference type="EC" id="2.3.2.27"/>
<dbReference type="EMBL" id="AJ293568">
    <property type="protein sequence ID" value="CAC21243.1"/>
    <property type="molecule type" value="Genomic_DNA"/>
</dbReference>
<dbReference type="RefSeq" id="NP_073390.1">
    <property type="nucleotide sequence ID" value="NC_002642.1"/>
</dbReference>
<dbReference type="SMR" id="Q9DHV7"/>
<dbReference type="GeneID" id="918655"/>
<dbReference type="KEGG" id="vg:918655"/>
<dbReference type="OrthoDB" id="27994at10239"/>
<dbReference type="Proteomes" id="UP000136581">
    <property type="component" value="Genome"/>
</dbReference>
<dbReference type="GO" id="GO:0044174">
    <property type="term" value="C:host cell endosome"/>
    <property type="evidence" value="ECO:0007669"/>
    <property type="project" value="UniProtKB-KW"/>
</dbReference>
<dbReference type="GO" id="GO:0044177">
    <property type="term" value="C:host cell Golgi apparatus"/>
    <property type="evidence" value="ECO:0007669"/>
    <property type="project" value="UniProtKB-SubCell"/>
</dbReference>
<dbReference type="GO" id="GO:0033644">
    <property type="term" value="C:host cell membrane"/>
    <property type="evidence" value="ECO:0007669"/>
    <property type="project" value="UniProtKB-SubCell"/>
</dbReference>
<dbReference type="GO" id="GO:0016020">
    <property type="term" value="C:membrane"/>
    <property type="evidence" value="ECO:0007669"/>
    <property type="project" value="UniProtKB-KW"/>
</dbReference>
<dbReference type="GO" id="GO:0016740">
    <property type="term" value="F:transferase activity"/>
    <property type="evidence" value="ECO:0007669"/>
    <property type="project" value="UniProtKB-KW"/>
</dbReference>
<dbReference type="GO" id="GO:0008270">
    <property type="term" value="F:zinc ion binding"/>
    <property type="evidence" value="ECO:0007669"/>
    <property type="project" value="UniProtKB-KW"/>
</dbReference>
<dbReference type="GO" id="GO:0039648">
    <property type="term" value="P:symbiont-mediated perturbation of host ubiquitin-like protein modification"/>
    <property type="evidence" value="ECO:0007669"/>
    <property type="project" value="UniProtKB-KW"/>
</dbReference>
<dbReference type="GO" id="GO:0046776">
    <property type="term" value="P:symbiont-mediated suppression of host antigen processing and presentation of peptide antigen via MHC class I"/>
    <property type="evidence" value="ECO:0007669"/>
    <property type="project" value="UniProtKB-KW"/>
</dbReference>
<dbReference type="Gene3D" id="3.30.40.10">
    <property type="entry name" value="Zinc/RING finger domain, C3HC4 (zinc finger)"/>
    <property type="match status" value="1"/>
</dbReference>
<dbReference type="InterPro" id="IPR011016">
    <property type="entry name" value="Znf_RING-CH"/>
</dbReference>
<dbReference type="InterPro" id="IPR013083">
    <property type="entry name" value="Znf_RING/FYVE/PHD"/>
</dbReference>
<dbReference type="PANTHER" id="PTHR46065">
    <property type="entry name" value="E3 UBIQUITIN-PROTEIN LIGASE MARCH 2/3 FAMILY MEMBER"/>
    <property type="match status" value="1"/>
</dbReference>
<dbReference type="PANTHER" id="PTHR46065:SF3">
    <property type="entry name" value="FI20425P1"/>
    <property type="match status" value="1"/>
</dbReference>
<dbReference type="Pfam" id="PF12906">
    <property type="entry name" value="RINGv"/>
    <property type="match status" value="1"/>
</dbReference>
<dbReference type="SMART" id="SM00744">
    <property type="entry name" value="RINGv"/>
    <property type="match status" value="1"/>
</dbReference>
<dbReference type="SUPFAM" id="SSF57850">
    <property type="entry name" value="RING/U-box"/>
    <property type="match status" value="1"/>
</dbReference>
<dbReference type="PROSITE" id="PS51292">
    <property type="entry name" value="ZF_RING_CH"/>
    <property type="match status" value="1"/>
</dbReference>